<sequence length="420" mass="48233">MKYRRIKGTNDIFGEEIWYWRYVEETFRNVCESAGIEEIRTPIFEQTELFVRSVGEESDIVQKEMYTFQDKAGRSITLRPEGTAPVVRAFLENSLIDRGFQQRYYYIGPMFRYEKPQSGRLRQFHQVGFEIIGPESPKADFEVIMLVDTFLRRLGLTKYKIHLNSIGCPVCRKNYREALKEYYGQVLDNLCDDCKRRYETNILRLLDCKVDHEYSLNAPKSVDYLCDSCRAHYKKLKEYLNTFEIEYVEDHTLVRGLDYYTRTVFEVRHEGLGAQSAIAGGGRYDGLFAELGGSSVPALGFAGGIERIILALKAEGIEIPMKNVHLVYIATLGEKAFMDGVRLAGELRKKGLSVDVDIMDRKLSGQLKHASRMGSRYAVIIGDEELEKGIVILRDLETGDQVEIDRDFAADYIAERVSKD</sequence>
<name>SYH_THESQ</name>
<organism>
    <name type="scientific">Thermotoga sp. (strain RQ2)</name>
    <dbReference type="NCBI Taxonomy" id="126740"/>
    <lineage>
        <taxon>Bacteria</taxon>
        <taxon>Thermotogati</taxon>
        <taxon>Thermotogota</taxon>
        <taxon>Thermotogae</taxon>
        <taxon>Thermotogales</taxon>
        <taxon>Thermotogaceae</taxon>
        <taxon>Thermotoga</taxon>
    </lineage>
</organism>
<proteinExistence type="inferred from homology"/>
<protein>
    <recommendedName>
        <fullName evidence="1">Histidine--tRNA ligase</fullName>
        <ecNumber evidence="1">6.1.1.21</ecNumber>
    </recommendedName>
    <alternativeName>
        <fullName evidence="1">Histidyl-tRNA synthetase</fullName>
        <shortName evidence="1">HisRS</shortName>
    </alternativeName>
</protein>
<accession>B1L829</accession>
<feature type="chain" id="PRO_1000095607" description="Histidine--tRNA ligase">
    <location>
        <begin position="1"/>
        <end position="420"/>
    </location>
</feature>
<comment type="catalytic activity">
    <reaction evidence="1">
        <text>tRNA(His) + L-histidine + ATP = L-histidyl-tRNA(His) + AMP + diphosphate + H(+)</text>
        <dbReference type="Rhea" id="RHEA:17313"/>
        <dbReference type="Rhea" id="RHEA-COMP:9665"/>
        <dbReference type="Rhea" id="RHEA-COMP:9689"/>
        <dbReference type="ChEBI" id="CHEBI:15378"/>
        <dbReference type="ChEBI" id="CHEBI:30616"/>
        <dbReference type="ChEBI" id="CHEBI:33019"/>
        <dbReference type="ChEBI" id="CHEBI:57595"/>
        <dbReference type="ChEBI" id="CHEBI:78442"/>
        <dbReference type="ChEBI" id="CHEBI:78527"/>
        <dbReference type="ChEBI" id="CHEBI:456215"/>
        <dbReference type="EC" id="6.1.1.21"/>
    </reaction>
</comment>
<comment type="subunit">
    <text evidence="1">Homodimer.</text>
</comment>
<comment type="subcellular location">
    <subcellularLocation>
        <location evidence="1">Cytoplasm</location>
    </subcellularLocation>
</comment>
<comment type="similarity">
    <text evidence="1">Belongs to the class-II aminoacyl-tRNA synthetase family.</text>
</comment>
<reference key="1">
    <citation type="journal article" date="2011" name="J. Bacteriol.">
        <title>Genome sequence of Thermotoga sp. strain RQ2, a hyperthermophilic bacterium isolated from a geothermally heated region of the seafloor near Ribeira Quente, the Azores.</title>
        <authorList>
            <person name="Swithers K.S."/>
            <person name="DiPippo J.L."/>
            <person name="Bruce D.C."/>
            <person name="Detter C."/>
            <person name="Tapia R."/>
            <person name="Han S."/>
            <person name="Saunders E."/>
            <person name="Goodwin L.A."/>
            <person name="Han J."/>
            <person name="Woyke T."/>
            <person name="Pitluck S."/>
            <person name="Pennacchio L."/>
            <person name="Nolan M."/>
            <person name="Mikhailova N."/>
            <person name="Lykidis A."/>
            <person name="Land M.L."/>
            <person name="Brettin T."/>
            <person name="Stetter K.O."/>
            <person name="Nelson K.E."/>
            <person name="Gogarten J.P."/>
            <person name="Noll K.M."/>
        </authorList>
    </citation>
    <scope>NUCLEOTIDE SEQUENCE [LARGE SCALE GENOMIC DNA]</scope>
    <source>
        <strain>RQ2</strain>
    </source>
</reference>
<evidence type="ECO:0000255" key="1">
    <source>
        <dbReference type="HAMAP-Rule" id="MF_00127"/>
    </source>
</evidence>
<dbReference type="EC" id="6.1.1.21" evidence="1"/>
<dbReference type="EMBL" id="CP000969">
    <property type="protein sequence ID" value="ACB10059.1"/>
    <property type="molecule type" value="Genomic_DNA"/>
</dbReference>
<dbReference type="RefSeq" id="WP_012311303.1">
    <property type="nucleotide sequence ID" value="NC_010483.1"/>
</dbReference>
<dbReference type="SMR" id="B1L829"/>
<dbReference type="KEGG" id="trq:TRQ2_1726"/>
<dbReference type="HOGENOM" id="CLU_025113_1_1_0"/>
<dbReference type="Proteomes" id="UP000001687">
    <property type="component" value="Chromosome"/>
</dbReference>
<dbReference type="GO" id="GO:0005737">
    <property type="term" value="C:cytoplasm"/>
    <property type="evidence" value="ECO:0007669"/>
    <property type="project" value="UniProtKB-SubCell"/>
</dbReference>
<dbReference type="GO" id="GO:0005524">
    <property type="term" value="F:ATP binding"/>
    <property type="evidence" value="ECO:0007669"/>
    <property type="project" value="UniProtKB-UniRule"/>
</dbReference>
<dbReference type="GO" id="GO:0004821">
    <property type="term" value="F:histidine-tRNA ligase activity"/>
    <property type="evidence" value="ECO:0007669"/>
    <property type="project" value="UniProtKB-UniRule"/>
</dbReference>
<dbReference type="GO" id="GO:0006427">
    <property type="term" value="P:histidyl-tRNA aminoacylation"/>
    <property type="evidence" value="ECO:0007669"/>
    <property type="project" value="UniProtKB-UniRule"/>
</dbReference>
<dbReference type="CDD" id="cd00773">
    <property type="entry name" value="HisRS-like_core"/>
    <property type="match status" value="1"/>
</dbReference>
<dbReference type="CDD" id="cd00859">
    <property type="entry name" value="HisRS_anticodon"/>
    <property type="match status" value="1"/>
</dbReference>
<dbReference type="FunFam" id="3.30.930.10:FF:000005">
    <property type="entry name" value="Histidine--tRNA ligase"/>
    <property type="match status" value="1"/>
</dbReference>
<dbReference type="FunFam" id="3.40.50.800:FF:000067">
    <property type="entry name" value="Histidine--tRNA ligase"/>
    <property type="match status" value="1"/>
</dbReference>
<dbReference type="Gene3D" id="3.40.50.800">
    <property type="entry name" value="Anticodon-binding domain"/>
    <property type="match status" value="1"/>
</dbReference>
<dbReference type="Gene3D" id="3.30.930.10">
    <property type="entry name" value="Bira Bifunctional Protein, Domain 2"/>
    <property type="match status" value="1"/>
</dbReference>
<dbReference type="HAMAP" id="MF_00127">
    <property type="entry name" value="His_tRNA_synth"/>
    <property type="match status" value="1"/>
</dbReference>
<dbReference type="InterPro" id="IPR006195">
    <property type="entry name" value="aa-tRNA-synth_II"/>
</dbReference>
<dbReference type="InterPro" id="IPR045864">
    <property type="entry name" value="aa-tRNA-synth_II/BPL/LPL"/>
</dbReference>
<dbReference type="InterPro" id="IPR004154">
    <property type="entry name" value="Anticodon-bd"/>
</dbReference>
<dbReference type="InterPro" id="IPR036621">
    <property type="entry name" value="Anticodon-bd_dom_sf"/>
</dbReference>
<dbReference type="InterPro" id="IPR015807">
    <property type="entry name" value="His-tRNA-ligase"/>
</dbReference>
<dbReference type="InterPro" id="IPR041715">
    <property type="entry name" value="HisRS-like_core"/>
</dbReference>
<dbReference type="InterPro" id="IPR004516">
    <property type="entry name" value="HisRS/HisZ"/>
</dbReference>
<dbReference type="InterPro" id="IPR033656">
    <property type="entry name" value="HisRS_anticodon"/>
</dbReference>
<dbReference type="NCBIfam" id="TIGR00442">
    <property type="entry name" value="hisS"/>
    <property type="match status" value="1"/>
</dbReference>
<dbReference type="PANTHER" id="PTHR43707:SF1">
    <property type="entry name" value="HISTIDINE--TRNA LIGASE, MITOCHONDRIAL-RELATED"/>
    <property type="match status" value="1"/>
</dbReference>
<dbReference type="PANTHER" id="PTHR43707">
    <property type="entry name" value="HISTIDYL-TRNA SYNTHETASE"/>
    <property type="match status" value="1"/>
</dbReference>
<dbReference type="Pfam" id="PF03129">
    <property type="entry name" value="HGTP_anticodon"/>
    <property type="match status" value="1"/>
</dbReference>
<dbReference type="Pfam" id="PF13393">
    <property type="entry name" value="tRNA-synt_His"/>
    <property type="match status" value="1"/>
</dbReference>
<dbReference type="PIRSF" id="PIRSF001549">
    <property type="entry name" value="His-tRNA_synth"/>
    <property type="match status" value="1"/>
</dbReference>
<dbReference type="SUPFAM" id="SSF52954">
    <property type="entry name" value="Class II aaRS ABD-related"/>
    <property type="match status" value="1"/>
</dbReference>
<dbReference type="SUPFAM" id="SSF55681">
    <property type="entry name" value="Class II aaRS and biotin synthetases"/>
    <property type="match status" value="1"/>
</dbReference>
<dbReference type="PROSITE" id="PS50862">
    <property type="entry name" value="AA_TRNA_LIGASE_II"/>
    <property type="match status" value="1"/>
</dbReference>
<keyword id="KW-0030">Aminoacyl-tRNA synthetase</keyword>
<keyword id="KW-0067">ATP-binding</keyword>
<keyword id="KW-0963">Cytoplasm</keyword>
<keyword id="KW-0436">Ligase</keyword>
<keyword id="KW-0547">Nucleotide-binding</keyword>
<keyword id="KW-0648">Protein biosynthesis</keyword>
<gene>
    <name evidence="1" type="primary">hisS</name>
    <name type="ordered locus">TRQ2_1726</name>
</gene>